<organism>
    <name type="scientific">African swine fever virus (isolate Pig/Kenya/KEN-50/1950)</name>
    <name type="common">ASFV</name>
    <dbReference type="NCBI Taxonomy" id="561445"/>
    <lineage>
        <taxon>Viruses</taxon>
        <taxon>Varidnaviria</taxon>
        <taxon>Bamfordvirae</taxon>
        <taxon>Nucleocytoviricota</taxon>
        <taxon>Pokkesviricetes</taxon>
        <taxon>Asfuvirales</taxon>
        <taxon>Asfarviridae</taxon>
        <taxon>Asfivirus</taxon>
        <taxon>African swine fever virus</taxon>
    </lineage>
</organism>
<sequence>MFSLQKKALQHIYMTPEDASDLTNDLLQHLGLYWNGPIIKMDTVVHLHNKMFSNQSVLKYALAKQANIKILETLVLWVEPEYALAQALKHNRKDVIECIFSHHLTTPSYHHIMHLTSSQELFEFFHLFICKSKNYHARMECLLYAATLYNFQNILEKNREYIVRHSIGNALFAIACKERHIHLIAWFATAGVFDTYDDSTLFNTAFRLGDYSLLEVACDLPITYPDHLIISMMQTAIQKNYFRFFKKLLTHFNVYRPIIITDAAYYNRRKILLLLFNQNIFNNFTILCALSAAIKGHASKKTLNLLINRLDAQMTVIDSVYYSIVKYNNIDCIPLLRHLKTFRIETLLSIAIHNNNIDIITACKAFLSKDKLYYLVLKMAIISRNDKLFKLYTEQENPMYIFTTMKTIISDLISHTVFQALAIECLREFHQEKQLPIASLLMVLAEHNYITKFKKACYAANMSDQKVKQALIKCLFIAAQKNCCQIFKYCFGSLLKVLSKHERNKFFNAVVFARKLASYDDHQEMIHLIDSLIKGFRYLIKD</sequence>
<proteinExistence type="inferred from homology"/>
<evidence type="ECO:0000250" key="1">
    <source>
        <dbReference type="UniProtKB" id="Q65208"/>
    </source>
</evidence>
<evidence type="ECO:0000305" key="2"/>
<comment type="function">
    <text evidence="1">Plays a role in virus cell tropism, and may be required for efficient virus replication in macrophages.</text>
</comment>
<comment type="induction">
    <text evidence="2">Expressed in the early phase of the viral replicative cycle.</text>
</comment>
<comment type="similarity">
    <text evidence="2">Belongs to the asfivirus MGF 505 family.</text>
</comment>
<keyword id="KW-0244">Early protein</keyword>
<accession>P0C9V3</accession>
<protein>
    <recommendedName>
        <fullName>Protein MGF 505-11L</fullName>
    </recommendedName>
</protein>
<dbReference type="EMBL" id="AY261360">
    <property type="status" value="NOT_ANNOTATED_CDS"/>
    <property type="molecule type" value="Genomic_DNA"/>
</dbReference>
<dbReference type="SMR" id="P0C9V3"/>
<dbReference type="Proteomes" id="UP000000861">
    <property type="component" value="Segment"/>
</dbReference>
<dbReference type="InterPro" id="IPR004858">
    <property type="entry name" value="MGF_505"/>
</dbReference>
<dbReference type="Pfam" id="PF03158">
    <property type="entry name" value="DUF249"/>
    <property type="match status" value="1"/>
</dbReference>
<name>50511_ASFK5</name>
<reference key="1">
    <citation type="submission" date="2003-03" db="EMBL/GenBank/DDBJ databases">
        <title>African swine fever virus genomes.</title>
        <authorList>
            <person name="Kutish G.F."/>
            <person name="Rock D.L."/>
        </authorList>
    </citation>
    <scope>NUCLEOTIDE SEQUENCE [LARGE SCALE GENOMIC DNA]</scope>
</reference>
<gene>
    <name type="ordered locus">Ken-161</name>
</gene>
<feature type="chain" id="PRO_0000373355" description="Protein MGF 505-11L">
    <location>
        <begin position="1"/>
        <end position="542"/>
    </location>
</feature>
<organismHost>
    <name type="scientific">Ornithodoros</name>
    <name type="common">relapsing fever ticks</name>
    <dbReference type="NCBI Taxonomy" id="6937"/>
</organismHost>
<organismHost>
    <name type="scientific">Phacochoerus aethiopicus</name>
    <name type="common">Warthog</name>
    <dbReference type="NCBI Taxonomy" id="85517"/>
</organismHost>
<organismHost>
    <name type="scientific">Phacochoerus africanus</name>
    <name type="common">Warthog</name>
    <dbReference type="NCBI Taxonomy" id="41426"/>
</organismHost>
<organismHost>
    <name type="scientific">Potamochoerus larvatus</name>
    <name type="common">Bushpig</name>
    <dbReference type="NCBI Taxonomy" id="273792"/>
</organismHost>
<organismHost>
    <name type="scientific">Sus scrofa</name>
    <name type="common">Pig</name>
    <dbReference type="NCBI Taxonomy" id="9823"/>
</organismHost>